<sequence>MSAETVNNYDYSDWYENAAPTKAPVEVIPPCDPTADEGLFHICIAAISLVVMLVLAILARRQKLSDNQRGLTGLLSPVNFLDHTQHKGLAVAVYGVLFCKLVGMVLSHHPLPFTKEVANKEFWMILALLYYPALYYPLLACGTLHNKVGYVLGSLLSWTHFGILVWQKVDCPKTPQIYKYYALFGSLPQIACLAFLSFQYPLLLFKGLQNTETANASEDLSSSYYRDYVKKILKKKKPTKISSSTSKPKLFDRLRDAVKSYIYTPEDVFRFPLKLAISVVVAFIALYQMALLLISGVLPTLHIVRRGVDENIAFLLAGFNIILSNDRQEVVRIVVYYLWCVEICYVSAVTLSCLVNLLMLMRSMVLHRSNLKGLYRGDSLNVFNCHRSIRPSRPALVCWMGFTSYQAAFLCLGMAIQTLVFFICILFAVFLIIIPILWGTNLMLFHIIGNLWPFWLTLVLAALIQHVASRFLFIRKDGGTRDLNNRGSLFLLSYILFLVNVMIGVVLGIWRVVITALFNIVHLGRLDISLLNRNVEAFDPGYRCYSHYLKIEVSQSHPVMKAFCGLLLQSSGQDGLSAQRIRDAEEGIQLVQQEKKQNKVSNAKRARAHWQLLYTLVNNPSLVGSRKHFQCQSSESFINGALSRTSKEGSKKDGSVNEPSKEAESAAASN</sequence>
<proteinExistence type="evidence at protein level"/>
<dbReference type="EMBL" id="CR855275">
    <property type="status" value="NOT_ANNOTATED_CDS"/>
    <property type="molecule type" value="Genomic_DNA"/>
</dbReference>
<dbReference type="EMBL" id="BC117633">
    <property type="protein sequence ID" value="AAI17634.1"/>
    <property type="molecule type" value="mRNA"/>
</dbReference>
<dbReference type="EMBL" id="BC135017">
    <property type="protein sequence ID" value="AAI35018.1"/>
    <property type="molecule type" value="mRNA"/>
</dbReference>
<dbReference type="RefSeq" id="NP_001038777.1">
    <property type="nucleotide sequence ID" value="NM_001045312.1"/>
</dbReference>
<dbReference type="RefSeq" id="XP_005170746.1">
    <property type="nucleotide sequence ID" value="XM_005170689.5"/>
</dbReference>
<dbReference type="RefSeq" id="XP_021326203.1">
    <property type="nucleotide sequence ID" value="XM_021470528.2"/>
</dbReference>
<dbReference type="PDB" id="5K8Q">
    <property type="method" value="X-ray"/>
    <property type="resolution" value="1.74 A"/>
    <property type="chains" value="B=600-626"/>
</dbReference>
<dbReference type="PDB" id="5SY1">
    <property type="method" value="EM"/>
    <property type="resolution" value="3.90 A"/>
    <property type="chains" value="A/B=1-670"/>
</dbReference>
<dbReference type="PDBsum" id="5K8Q"/>
<dbReference type="PDBsum" id="5SY1"/>
<dbReference type="EMDB" id="EMD-8315"/>
<dbReference type="SMR" id="F1RAX4"/>
<dbReference type="FunCoup" id="F1RAX4">
    <property type="interactions" value="2291"/>
</dbReference>
<dbReference type="STRING" id="7955.ENSDARP00000067478"/>
<dbReference type="TCDB" id="2.A.90.1.4">
    <property type="family name" value="the vitamin a receptor/transporter (stra6) family"/>
</dbReference>
<dbReference type="PaxDb" id="7955-ENSDARP00000067478"/>
<dbReference type="Ensembl" id="ENSDART00000067479">
    <property type="protein sequence ID" value="ENSDARP00000067478"/>
    <property type="gene ID" value="ENSDARG00000051874"/>
</dbReference>
<dbReference type="Ensembl" id="ENSDART00000152096">
    <property type="protein sequence ID" value="ENSDARP00000126450"/>
    <property type="gene ID" value="ENSDARG00000051874"/>
</dbReference>
<dbReference type="Ensembl" id="ENSDART00000161559">
    <property type="protein sequence ID" value="ENSDARP00000131530"/>
    <property type="gene ID" value="ENSDARG00000051874"/>
</dbReference>
<dbReference type="Ensembl" id="ENSDART00000190851">
    <property type="protein sequence ID" value="ENSDARP00000146793"/>
    <property type="gene ID" value="ENSDARG00000115031"/>
</dbReference>
<dbReference type="GeneID" id="724007"/>
<dbReference type="KEGG" id="dre:724007"/>
<dbReference type="AGR" id="ZFIN:ZDB-GENE-060616-252"/>
<dbReference type="CTD" id="64220"/>
<dbReference type="ZFIN" id="ZDB-GENE-060616-252">
    <property type="gene designation" value="stra6"/>
</dbReference>
<dbReference type="eggNOG" id="ENOG502QRSS">
    <property type="taxonomic scope" value="Eukaryota"/>
</dbReference>
<dbReference type="InParanoid" id="F1RAX4"/>
<dbReference type="OMA" id="TKDPMAK"/>
<dbReference type="OrthoDB" id="9939815at2759"/>
<dbReference type="PhylomeDB" id="F1RAX4"/>
<dbReference type="TreeFam" id="TF331851"/>
<dbReference type="PRO" id="PR:F1RAX4"/>
<dbReference type="Proteomes" id="UP000000437">
    <property type="component" value="Alternate scaffold 25"/>
</dbReference>
<dbReference type="Proteomes" id="UP000000437">
    <property type="component" value="Chromosome 25"/>
</dbReference>
<dbReference type="Bgee" id="ENSDARG00000051874">
    <property type="expression patterns" value="Expressed in intestine and 25 other cell types or tissues"/>
</dbReference>
<dbReference type="GO" id="GO:0005886">
    <property type="term" value="C:plasma membrane"/>
    <property type="evidence" value="ECO:0000314"/>
    <property type="project" value="ZFIN"/>
</dbReference>
<dbReference type="GO" id="GO:0005516">
    <property type="term" value="F:calmodulin binding"/>
    <property type="evidence" value="ECO:0000314"/>
    <property type="project" value="ZFIN"/>
</dbReference>
<dbReference type="GO" id="GO:0042802">
    <property type="term" value="F:identical protein binding"/>
    <property type="evidence" value="ECO:0000353"/>
    <property type="project" value="ZFIN"/>
</dbReference>
<dbReference type="GO" id="GO:0060090">
    <property type="term" value="F:molecular adaptor activity"/>
    <property type="evidence" value="ECO:0000314"/>
    <property type="project" value="DisProt"/>
</dbReference>
<dbReference type="GO" id="GO:0016918">
    <property type="term" value="F:retinal binding"/>
    <property type="evidence" value="ECO:0007669"/>
    <property type="project" value="UniProtKB-KW"/>
</dbReference>
<dbReference type="GO" id="GO:0019841">
    <property type="term" value="F:retinol binding"/>
    <property type="evidence" value="ECO:0007669"/>
    <property type="project" value="UniProtKB-KW"/>
</dbReference>
<dbReference type="GO" id="GO:0034632">
    <property type="term" value="F:retinol transmembrane transporter activity"/>
    <property type="evidence" value="ECO:0007669"/>
    <property type="project" value="InterPro"/>
</dbReference>
<dbReference type="GO" id="GO:0038023">
    <property type="term" value="F:signaling receptor activity"/>
    <property type="evidence" value="ECO:0007669"/>
    <property type="project" value="InterPro"/>
</dbReference>
<dbReference type="GO" id="GO:0043009">
    <property type="term" value="P:chordate embryonic development"/>
    <property type="evidence" value="ECO:0000315"/>
    <property type="project" value="ZFIN"/>
</dbReference>
<dbReference type="GO" id="GO:0034633">
    <property type="term" value="P:retinol transport"/>
    <property type="evidence" value="ECO:0000314"/>
    <property type="project" value="ZFIN"/>
</dbReference>
<dbReference type="GO" id="GO:0071939">
    <property type="term" value="P:vitamin A import into cell"/>
    <property type="evidence" value="ECO:0000318"/>
    <property type="project" value="GO_Central"/>
</dbReference>
<dbReference type="DisProt" id="DP02583"/>
<dbReference type="InterPro" id="IPR026612">
    <property type="entry name" value="STRA6-like"/>
</dbReference>
<dbReference type="PANTHER" id="PTHR21444">
    <property type="entry name" value="COILED-COIL DOMAIN-CONTAINING PROTEIN 180"/>
    <property type="match status" value="1"/>
</dbReference>
<dbReference type="PANTHER" id="PTHR21444:SF16">
    <property type="entry name" value="RECEPTOR FOR RETINOL UPTAKE STRA6"/>
    <property type="match status" value="1"/>
</dbReference>
<dbReference type="Pfam" id="PF14752">
    <property type="entry name" value="RBP_receptor"/>
    <property type="match status" value="1"/>
</dbReference>
<evidence type="ECO:0000256" key="1">
    <source>
        <dbReference type="SAM" id="MobiDB-lite"/>
    </source>
</evidence>
<evidence type="ECO:0000269" key="2">
    <source>
    </source>
</evidence>
<evidence type="ECO:0000269" key="3">
    <source>
    </source>
</evidence>
<evidence type="ECO:0000303" key="4">
    <source>
    </source>
</evidence>
<evidence type="ECO:0000305" key="5"/>
<evidence type="ECO:0000312" key="6">
    <source>
        <dbReference type="EMBL" id="AAI35018.1"/>
    </source>
</evidence>
<evidence type="ECO:0000312" key="7">
    <source>
        <dbReference type="Proteomes" id="UP000000437"/>
    </source>
</evidence>
<evidence type="ECO:0000312" key="8">
    <source>
        <dbReference type="ZFIN" id="ZDB-GENE-060616-252"/>
    </source>
</evidence>
<evidence type="ECO:0007744" key="9">
    <source>
        <dbReference type="PDB" id="5K8Q"/>
    </source>
</evidence>
<evidence type="ECO:0007744" key="10">
    <source>
        <dbReference type="PDB" id="5SY1"/>
    </source>
</evidence>
<evidence type="ECO:0007829" key="11">
    <source>
        <dbReference type="PDB" id="5K8Q"/>
    </source>
</evidence>
<reference key="1">
    <citation type="journal article" date="2013" name="Nature">
        <title>The zebrafish reference genome sequence and its relationship to the human genome.</title>
        <authorList>
            <person name="Howe K."/>
            <person name="Clark M.D."/>
            <person name="Torroja C.F."/>
            <person name="Torrance J."/>
            <person name="Berthelot C."/>
            <person name="Muffato M."/>
            <person name="Collins J.E."/>
            <person name="Humphray S."/>
            <person name="McLaren K."/>
            <person name="Matthews L."/>
            <person name="McLaren S."/>
            <person name="Sealy I."/>
            <person name="Caccamo M."/>
            <person name="Churcher C."/>
            <person name="Scott C."/>
            <person name="Barrett J.C."/>
            <person name="Koch R."/>
            <person name="Rauch G.J."/>
            <person name="White S."/>
            <person name="Chow W."/>
            <person name="Kilian B."/>
            <person name="Quintais L.T."/>
            <person name="Guerra-Assuncao J.A."/>
            <person name="Zhou Y."/>
            <person name="Gu Y."/>
            <person name="Yen J."/>
            <person name="Vogel J.H."/>
            <person name="Eyre T."/>
            <person name="Redmond S."/>
            <person name="Banerjee R."/>
            <person name="Chi J."/>
            <person name="Fu B."/>
            <person name="Langley E."/>
            <person name="Maguire S.F."/>
            <person name="Laird G.K."/>
            <person name="Lloyd D."/>
            <person name="Kenyon E."/>
            <person name="Donaldson S."/>
            <person name="Sehra H."/>
            <person name="Almeida-King J."/>
            <person name="Loveland J."/>
            <person name="Trevanion S."/>
            <person name="Jones M."/>
            <person name="Quail M."/>
            <person name="Willey D."/>
            <person name="Hunt A."/>
            <person name="Burton J."/>
            <person name="Sims S."/>
            <person name="McLay K."/>
            <person name="Plumb B."/>
            <person name="Davis J."/>
            <person name="Clee C."/>
            <person name="Oliver K."/>
            <person name="Clark R."/>
            <person name="Riddle C."/>
            <person name="Elliot D."/>
            <person name="Threadgold G."/>
            <person name="Harden G."/>
            <person name="Ware D."/>
            <person name="Begum S."/>
            <person name="Mortimore B."/>
            <person name="Kerry G."/>
            <person name="Heath P."/>
            <person name="Phillimore B."/>
            <person name="Tracey A."/>
            <person name="Corby N."/>
            <person name="Dunn M."/>
            <person name="Johnson C."/>
            <person name="Wood J."/>
            <person name="Clark S."/>
            <person name="Pelan S."/>
            <person name="Griffiths G."/>
            <person name="Smith M."/>
            <person name="Glithero R."/>
            <person name="Howden P."/>
            <person name="Barker N."/>
            <person name="Lloyd C."/>
            <person name="Stevens C."/>
            <person name="Harley J."/>
            <person name="Holt K."/>
            <person name="Panagiotidis G."/>
            <person name="Lovell J."/>
            <person name="Beasley H."/>
            <person name="Henderson C."/>
            <person name="Gordon D."/>
            <person name="Auger K."/>
            <person name="Wright D."/>
            <person name="Collins J."/>
            <person name="Raisen C."/>
            <person name="Dyer L."/>
            <person name="Leung K."/>
            <person name="Robertson L."/>
            <person name="Ambridge K."/>
            <person name="Leongamornlert D."/>
            <person name="McGuire S."/>
            <person name="Gilderthorp R."/>
            <person name="Griffiths C."/>
            <person name="Manthravadi D."/>
            <person name="Nichol S."/>
            <person name="Barker G."/>
            <person name="Whitehead S."/>
            <person name="Kay M."/>
            <person name="Brown J."/>
            <person name="Murnane C."/>
            <person name="Gray E."/>
            <person name="Humphries M."/>
            <person name="Sycamore N."/>
            <person name="Barker D."/>
            <person name="Saunders D."/>
            <person name="Wallis J."/>
            <person name="Babbage A."/>
            <person name="Hammond S."/>
            <person name="Mashreghi-Mohammadi M."/>
            <person name="Barr L."/>
            <person name="Martin S."/>
            <person name="Wray P."/>
            <person name="Ellington A."/>
            <person name="Matthews N."/>
            <person name="Ellwood M."/>
            <person name="Woodmansey R."/>
            <person name="Clark G."/>
            <person name="Cooper J."/>
            <person name="Tromans A."/>
            <person name="Grafham D."/>
            <person name="Skuce C."/>
            <person name="Pandian R."/>
            <person name="Andrews R."/>
            <person name="Harrison E."/>
            <person name="Kimberley A."/>
            <person name="Garnett J."/>
            <person name="Fosker N."/>
            <person name="Hall R."/>
            <person name="Garner P."/>
            <person name="Kelly D."/>
            <person name="Bird C."/>
            <person name="Palmer S."/>
            <person name="Gehring I."/>
            <person name="Berger A."/>
            <person name="Dooley C.M."/>
            <person name="Ersan-Urun Z."/>
            <person name="Eser C."/>
            <person name="Geiger H."/>
            <person name="Geisler M."/>
            <person name="Karotki L."/>
            <person name="Kirn A."/>
            <person name="Konantz J."/>
            <person name="Konantz M."/>
            <person name="Oberlander M."/>
            <person name="Rudolph-Geiger S."/>
            <person name="Teucke M."/>
            <person name="Lanz C."/>
            <person name="Raddatz G."/>
            <person name="Osoegawa K."/>
            <person name="Zhu B."/>
            <person name="Rapp A."/>
            <person name="Widaa S."/>
            <person name="Langford C."/>
            <person name="Yang F."/>
            <person name="Schuster S.C."/>
            <person name="Carter N.P."/>
            <person name="Harrow J."/>
            <person name="Ning Z."/>
            <person name="Herrero J."/>
            <person name="Searle S.M."/>
            <person name="Enright A."/>
            <person name="Geisler R."/>
            <person name="Plasterk R.H."/>
            <person name="Lee C."/>
            <person name="Westerfield M."/>
            <person name="de Jong P.J."/>
            <person name="Zon L.I."/>
            <person name="Postlethwait J.H."/>
            <person name="Nusslein-Volhard C."/>
            <person name="Hubbard T.J."/>
            <person name="Roest Crollius H."/>
            <person name="Rogers J."/>
            <person name="Stemple D.L."/>
        </authorList>
    </citation>
    <scope>NUCLEOTIDE SEQUENCE [LARGE SCALE GENOMIC DNA]</scope>
    <source>
        <strain>Tuebingen</strain>
    </source>
</reference>
<reference evidence="6" key="2">
    <citation type="submission" date="2007-03" db="EMBL/GenBank/DDBJ databases">
        <authorList>
            <consortium name="NIH - Zebrafish Gene Collection (ZGC) project"/>
        </authorList>
    </citation>
    <scope>NUCLEOTIDE SEQUENCE [LARGE SCALE MRNA]</scope>
    <source>
        <strain evidence="6">Singapore</strain>
        <tissue evidence="6">Embryo</tissue>
    </source>
</reference>
<reference key="3">
    <citation type="journal article" date="2008" name="Cell Metab.">
        <title>RBP4 disrupts vitamin A uptake homeostasis in a STRA6-deficient animal model for Matthew-Wood syndrome.</title>
        <authorList>
            <person name="Isken A."/>
            <person name="Golczak M."/>
            <person name="Oberhauser V."/>
            <person name="Hunzelmann S."/>
            <person name="Driever W."/>
            <person name="Imanishi Y."/>
            <person name="Palczewski K."/>
            <person name="von Lintig J."/>
        </authorList>
    </citation>
    <scope>DISRUPTION PHENOTYPE</scope>
    <scope>FUNCTION</scope>
    <scope>DEVELOPMENTAL STAGE</scope>
</reference>
<reference evidence="9 10" key="4">
    <citation type="journal article" date="2016" name="Science">
        <title>Structure of the STRA6 receptor for retinol uptake.</title>
        <authorList>
            <person name="Chen Y."/>
            <person name="Clarke O.B."/>
            <person name="Kim J."/>
            <person name="Stowe S."/>
            <person name="Kim Y.K."/>
            <person name="Assur Z."/>
            <person name="Cavalier M."/>
            <person name="Godoy-Ruiz R."/>
            <person name="von Alpen D.C."/>
            <person name="Manzini C."/>
            <person name="Blaner W.S."/>
            <person name="Frank J."/>
            <person name="Quadro L."/>
            <person name="Weber D.J."/>
            <person name="Shapiro L."/>
            <person name="Hendrickson W.A."/>
            <person name="Mancia F."/>
        </authorList>
    </citation>
    <scope>STRUCTURE BY ELECTRON MICROSCOPY (3.90 ANGSTROMS) IN COMPLEX WITH CALMODULIN</scope>
    <scope>X-RAY CRYSTALLOGRAPHY (1.74 ANGSTROMS) OF 600-62 IN COMPLEX WITH CALMODULIN</scope>
    <scope>FUNCTION</scope>
    <scope>SUBUNIT</scope>
    <scope>SUBCELLULAR LOCATION</scope>
    <scope>TOPOLOGY</scope>
    <scope>DOMAIN</scope>
</reference>
<feature type="chain" id="PRO_0000442341" description="Receptor for retinol uptake stra6">
    <location>
        <begin position="1"/>
        <end position="670"/>
    </location>
</feature>
<feature type="topological domain" description="Extracellular" evidence="3">
    <location>
        <begin position="1"/>
        <end position="38"/>
    </location>
</feature>
<feature type="transmembrane region" description="Helical" evidence="3">
    <location>
        <begin position="39"/>
        <end position="59"/>
    </location>
</feature>
<feature type="topological domain" description="Cytoplasmic" evidence="3">
    <location>
        <begin position="60"/>
        <end position="87"/>
    </location>
</feature>
<feature type="transmembrane region" description="Helical" evidence="3">
    <location>
        <begin position="88"/>
        <end position="108"/>
    </location>
</feature>
<feature type="topological domain" description="Extracellular" evidence="3">
    <location>
        <begin position="109"/>
        <end position="121"/>
    </location>
</feature>
<feature type="transmembrane region" description="Helical" evidence="3">
    <location>
        <begin position="122"/>
        <end position="142"/>
    </location>
</feature>
<feature type="topological domain" description="Cytoplasmic" evidence="3">
    <location>
        <begin position="143"/>
        <end position="145"/>
    </location>
</feature>
<feature type="transmembrane region" description="Helical" evidence="3">
    <location>
        <begin position="146"/>
        <end position="166"/>
    </location>
</feature>
<feature type="topological domain" description="Extracellular" evidence="3">
    <location>
        <begin position="167"/>
        <end position="182"/>
    </location>
</feature>
<feature type="transmembrane region" description="Helical" evidence="3">
    <location>
        <begin position="183"/>
        <end position="203"/>
    </location>
</feature>
<feature type="topological domain" description="Cytoplasmic" evidence="3">
    <location>
        <begin position="204"/>
        <end position="274"/>
    </location>
</feature>
<feature type="transmembrane region" description="Helical" evidence="3">
    <location>
        <begin position="275"/>
        <end position="295"/>
    </location>
</feature>
<feature type="topological domain" description="Extracellular" evidence="3">
    <location>
        <begin position="296"/>
        <end position="346"/>
    </location>
</feature>
<feature type="transmembrane region" description="Helical" evidence="3">
    <location>
        <begin position="347"/>
        <end position="367"/>
    </location>
</feature>
<feature type="topological domain" description="Cytoplasmic" evidence="3">
    <location>
        <begin position="368"/>
        <end position="401"/>
    </location>
</feature>
<feature type="transmembrane region" description="Helical" evidence="3">
    <location>
        <begin position="402"/>
        <end position="422"/>
    </location>
</feature>
<feature type="topological domain" description="Extracellular" evidence="3">
    <location>
        <begin position="423"/>
        <end position="452"/>
    </location>
</feature>
<feature type="transmembrane region" description="Helical" evidence="3">
    <location>
        <begin position="453"/>
        <end position="473"/>
    </location>
</feature>
<feature type="topological domain" description="Cytoplasmic" evidence="3">
    <location>
        <begin position="474"/>
        <end position="488"/>
    </location>
</feature>
<feature type="intramembrane region" description="Helical" evidence="3">
    <location>
        <begin position="489"/>
        <end position="526"/>
    </location>
</feature>
<feature type="topological domain" description="Cytoplasmic" evidence="3">
    <location>
        <begin position="527"/>
        <end position="670"/>
    </location>
</feature>
<feature type="region of interest" description="Interaction with calmodulin" evidence="3">
    <location>
        <begin position="600"/>
        <end position="626"/>
    </location>
</feature>
<feature type="region of interest" description="Disordered" evidence="1">
    <location>
        <begin position="640"/>
        <end position="670"/>
    </location>
</feature>
<feature type="compositionally biased region" description="Basic and acidic residues" evidence="1">
    <location>
        <begin position="645"/>
        <end position="664"/>
    </location>
</feature>
<feature type="sequence conflict" description="In Ref. 2; AAI35018." evidence="5" ref="2">
    <original>A</original>
    <variation>T</variation>
    <location>
        <position position="133"/>
    </location>
</feature>
<feature type="sequence conflict" description="In Ref. 2; AAI17634/AAI35018." evidence="5" ref="2">
    <original>N</original>
    <variation>K</variation>
    <location>
        <position position="657"/>
    </location>
</feature>
<feature type="sequence conflict" description="In Ref. 2; AAI35018." evidence="5" ref="2">
    <original>S</original>
    <variation>N</variation>
    <location>
        <position position="660"/>
    </location>
</feature>
<feature type="helix" evidence="11">
    <location>
        <begin position="603"/>
        <end position="618"/>
    </location>
</feature>
<feature type="helix" evidence="11">
    <location>
        <begin position="620"/>
        <end position="622"/>
    </location>
</feature>
<comment type="function">
    <text evidence="2 3">Retinol transporter. Accepts retinol from the extracellular retinol-binding protein rbp4, mediates retinol transport across the cell membrane, and then transmits retinol to the cytoplasmic retinol-binding protein rbp1 (PubMed:27563101). Required for normal vitamin A homeostasis (PubMed:18316031).</text>
</comment>
<comment type="subunit">
    <text evidence="3">Homodimer. Interacts (via C-terminus) with calmodulin.</text>
</comment>
<comment type="subcellular location">
    <subcellularLocation>
        <location evidence="3">Cell membrane</location>
        <topology evidence="3">Multi-pass membrane protein</topology>
    </subcellularLocation>
</comment>
<comment type="developmental stage">
    <text evidence="2">Detected in embryos (at protein level). Detected in the yolk syncytium and in mesendodermal cells in the head and trunk region during early somitogenesis. Detected in the developing eyes, the anterior midbrain, the pineal gland and in anterior somites at 24 hpf. Detected only in the eyes and the pineal gland at 3 and 4 dpf. Detected in retinal pigment epithelium at 4 dpf.</text>
</comment>
<comment type="domain">
    <text evidence="3">Contrary to predictions, contains nine transmembrane helices, with an extracellular N-terminus and a cytoplasmic C-terminus. Besides, contains one long helix that dips into the membrane and then runs more or less parallel to the membrane surface.</text>
</comment>
<comment type="disruption phenotype">
    <text evidence="2">Morpholino knockdown causes severe defects in embryonic development, with microphthalmia, a curved body axis and heart edema. The morphant hearts do not loop normally, heart atria are strongly dilated and blood circulation is severely impaired. Morphants have an altered morphology of the craniofacial skeleton, with malformation of the first and second arches and absence of the branchial arches. Embryonic heads at 4 dpf display reduced total retinyl ester levels and reduced levels of the visual pigment 11-cis-retinal. Morpholino knockdown of both stra6 and rbp4 alleviates the developmental impairment that is observed in stra6 morphants, suggesting the phenotype is due to impaired vitamin A homeostasis and excessive accumulation of retinoic acid.</text>
</comment>
<protein>
    <recommendedName>
        <fullName evidence="4">Receptor for retinol uptake stra6</fullName>
    </recommendedName>
    <alternativeName>
        <fullName>Stimulated by retinoic acid gene 6 protein homolog</fullName>
    </alternativeName>
</protein>
<name>STRA6_DANRE</name>
<accession>F1RAX4</accession>
<accession>A4IGB6</accession>
<accession>Q1ECX5</accession>
<organism evidence="7">
    <name type="scientific">Danio rerio</name>
    <name type="common">Zebrafish</name>
    <name type="synonym">Brachydanio rerio</name>
    <dbReference type="NCBI Taxonomy" id="7955"/>
    <lineage>
        <taxon>Eukaryota</taxon>
        <taxon>Metazoa</taxon>
        <taxon>Chordata</taxon>
        <taxon>Craniata</taxon>
        <taxon>Vertebrata</taxon>
        <taxon>Euteleostomi</taxon>
        <taxon>Actinopterygii</taxon>
        <taxon>Neopterygii</taxon>
        <taxon>Teleostei</taxon>
        <taxon>Ostariophysi</taxon>
        <taxon>Cypriniformes</taxon>
        <taxon>Danionidae</taxon>
        <taxon>Danioninae</taxon>
        <taxon>Danio</taxon>
    </lineage>
</organism>
<keyword id="KW-0002">3D-structure</keyword>
<keyword id="KW-0112">Calmodulin-binding</keyword>
<keyword id="KW-1003">Cell membrane</keyword>
<keyword id="KW-0472">Membrane</keyword>
<keyword id="KW-0675">Receptor</keyword>
<keyword id="KW-1185">Reference proteome</keyword>
<keyword id="KW-0683">Retinol-binding</keyword>
<keyword id="KW-0812">Transmembrane</keyword>
<keyword id="KW-1133">Transmembrane helix</keyword>
<keyword id="KW-0813">Transport</keyword>
<keyword id="KW-0845">Vitamin A</keyword>
<gene>
    <name evidence="8" type="primary">stra6</name>
</gene>